<proteinExistence type="evidence at transcript level"/>
<protein>
    <recommendedName>
        <fullName evidence="4">Gallerimycin</fullName>
    </recommendedName>
    <alternativeName>
        <fullName evidence="4">Defensin-like peptide gallerimycin</fullName>
    </alternativeName>
</protein>
<evidence type="ECO:0000255" key="1"/>
<evidence type="ECO:0000269" key="2">
    <source>
    </source>
</evidence>
<evidence type="ECO:0000269" key="3">
    <source>
    </source>
</evidence>
<evidence type="ECO:0000303" key="4">
    <source>
    </source>
</evidence>
<evidence type="ECO:0000305" key="5"/>
<evidence type="ECO:0000312" key="6">
    <source>
        <dbReference type="EMBL" id="AAM46728.1"/>
    </source>
</evidence>
<evidence type="ECO:0000312" key="7">
    <source>
        <dbReference type="Proteomes" id="UP000504614"/>
    </source>
</evidence>
<sequence length="76" mass="8400">MKIAFIVAISLAFLAVTSCIEFEKSTESHDIQKRGVTITVKPPFPGCVFYECIANCRSRGYKNGGYCTINGCQCLR</sequence>
<dbReference type="EMBL" id="AF453824">
    <property type="protein sequence ID" value="AAM46728.1"/>
    <property type="molecule type" value="mRNA"/>
</dbReference>
<dbReference type="SMR" id="Q8MVY9"/>
<dbReference type="EnsemblMetazoa" id="XM_026909420.2">
    <property type="protein sequence ID" value="XP_026765221.1"/>
    <property type="gene ID" value="LOC113523440"/>
</dbReference>
<dbReference type="InParanoid" id="Q8MVY9"/>
<dbReference type="Proteomes" id="UP000504614">
    <property type="component" value="Unplaced"/>
</dbReference>
<dbReference type="GO" id="GO:0006952">
    <property type="term" value="P:defense response"/>
    <property type="evidence" value="ECO:0007669"/>
    <property type="project" value="UniProtKB-KW"/>
</dbReference>
<organism evidence="7">
    <name type="scientific">Galleria mellonella</name>
    <name type="common">Greater wax moth</name>
    <dbReference type="NCBI Taxonomy" id="7137"/>
    <lineage>
        <taxon>Eukaryota</taxon>
        <taxon>Metazoa</taxon>
        <taxon>Ecdysozoa</taxon>
        <taxon>Arthropoda</taxon>
        <taxon>Hexapoda</taxon>
        <taxon>Insecta</taxon>
        <taxon>Pterygota</taxon>
        <taxon>Neoptera</taxon>
        <taxon>Endopterygota</taxon>
        <taxon>Lepidoptera</taxon>
        <taxon>Glossata</taxon>
        <taxon>Ditrysia</taxon>
        <taxon>Pyraloidea</taxon>
        <taxon>Pyralidae</taxon>
        <taxon>Galleriinae</taxon>
        <taxon>Galleria</taxon>
    </lineage>
</organism>
<accession>Q8MVY9</accession>
<feature type="signal peptide" evidence="1">
    <location>
        <begin position="1"/>
        <end position="19"/>
    </location>
</feature>
<feature type="chain" id="PRO_5029322080" description="Gallerimycin" evidence="1">
    <location>
        <begin position="20"/>
        <end position="76"/>
    </location>
</feature>
<reference evidence="6" key="1">
    <citation type="journal article" date="2003" name="Arch. Insect Biochem. Physiol.">
        <title>Cloning and expression of gallerimycin, an antifungal peptide expressed in immune response of greater wax moth larvae, Galleria mellonella.</title>
        <authorList>
            <person name="Schuhmann B."/>
            <person name="Seitz V."/>
            <person name="Vilcinskas A."/>
            <person name="Podsiadlowski L."/>
        </authorList>
    </citation>
    <scope>NUCLEOTIDE SEQUENCE [MRNA]</scope>
    <scope>FUNCTION</scope>
    <scope>INDUCTION BY LPS</scope>
</reference>
<reference evidence="5" key="2">
    <citation type="journal article" date="2021" name="Molecules">
        <title>Fungal alpha-1,3-Glucan as a New Pathogen-Associated Molecular Pattern in the Insect Model Host Galleria mellonella.</title>
        <authorList>
            <person name="Staczek S."/>
            <person name="Zdybicka-Barabas A."/>
            <person name="Wojda I."/>
            <person name="Wiater A."/>
            <person name="Mak P."/>
            <person name="Suder P."/>
            <person name="Skrzypiec K."/>
            <person name="Cytrynska M."/>
        </authorList>
    </citation>
    <scope>DEVELOPMENTAL STAGE</scope>
    <scope>INDUCTION BY A.NIGER ALPHA-1,3-GLUCAN</scope>
</reference>
<name>GAL_GALME</name>
<comment type="function">
    <text evidence="2">Has antifungal activity against the entomopathogenic fungus M.nisopliae, but does not display any antifungal activity against S.cerevisiae nor any antimicrobial activity against M.luteus, B.subtilis, and E.coli.</text>
</comment>
<comment type="developmental stage">
    <text evidence="3">Expressed in fat body of last instar larvae.</text>
</comment>
<comment type="induction">
    <text evidence="2 3">Induced by lipopolysaccharides (LSP) (PubMed:12811766). Induced by A.niger alpha-1,3-glucan (PubMed:34443685).</text>
</comment>
<comment type="similarity">
    <text evidence="5">Belongs to the invertebrate defensin family.</text>
</comment>
<keyword id="KW-0929">Antimicrobial</keyword>
<keyword id="KW-0211">Defensin</keyword>
<keyword id="KW-1185">Reference proteome</keyword>
<keyword id="KW-0732">Signal</keyword>
<gene>
    <name type="primary">LOC113523440</name>
</gene>